<protein>
    <recommendedName>
        <fullName evidence="1">N-glycosylase/DNA lyase</fullName>
    </recommendedName>
    <alternativeName>
        <fullName evidence="1">8-oxoguanine DNA glycosylase</fullName>
        <ecNumber evidence="1">3.2.2.-</ecNumber>
    </alternativeName>
    <alternativeName>
        <fullName evidence="1">AGOG</fullName>
    </alternativeName>
    <alternativeName>
        <fullName evidence="1">DNA-(apurinic or apyrimidinic site) lyase</fullName>
        <shortName evidence="1">AP lyase</shortName>
        <ecNumber evidence="1">4.2.99.18</ecNumber>
    </alternativeName>
</protein>
<accession>O58954</accession>
<evidence type="ECO:0000255" key="1">
    <source>
        <dbReference type="HAMAP-Rule" id="MF_01168"/>
    </source>
</evidence>
<name>AGOG_PYRHO</name>
<feature type="chain" id="PRO_0000185115" description="N-glycosylase/DNA lyase">
    <location>
        <begin position="1"/>
        <end position="239"/>
    </location>
</feature>
<feature type="region of interest" description="Helix-hairpin-helix">
    <location>
        <begin position="118"/>
        <end position="182"/>
    </location>
</feature>
<feature type="active site" description="Schiff-base intermediate with DNA" evidence="1">
    <location>
        <position position="142"/>
    </location>
</feature>
<feature type="active site" evidence="1">
    <location>
        <position position="174"/>
    </location>
</feature>
<feature type="binding site" evidence="1">
    <location>
        <position position="24"/>
    </location>
    <ligand>
        <name>8-oxoguanine</name>
        <dbReference type="ChEBI" id="CHEBI:52617"/>
    </ligand>
</feature>
<feature type="binding site" evidence="1">
    <location>
        <position position="51"/>
    </location>
    <ligand>
        <name>8-oxoguanine</name>
        <dbReference type="ChEBI" id="CHEBI:52617"/>
    </ligand>
</feature>
<feature type="binding site" evidence="1">
    <location>
        <position position="62"/>
    </location>
    <ligand>
        <name>8-oxoguanine</name>
        <dbReference type="ChEBI" id="CHEBI:52617"/>
    </ligand>
</feature>
<feature type="binding site" evidence="1">
    <location>
        <position position="146"/>
    </location>
    <ligand>
        <name>8-oxoguanine</name>
        <dbReference type="ChEBI" id="CHEBI:52617"/>
    </ligand>
</feature>
<feature type="binding site" evidence="1">
    <location>
        <position position="172"/>
    </location>
    <ligand>
        <name>8-oxoguanine</name>
        <dbReference type="ChEBI" id="CHEBI:52617"/>
    </ligand>
</feature>
<feature type="binding site" evidence="1">
    <location>
        <position position="208"/>
    </location>
    <ligand>
        <name>8-oxoguanine</name>
        <dbReference type="ChEBI" id="CHEBI:52617"/>
    </ligand>
</feature>
<feature type="binding site" evidence="1">
    <location>
        <position position="212"/>
    </location>
    <ligand>
        <name>8-oxoguanine</name>
        <dbReference type="ChEBI" id="CHEBI:52617"/>
    </ligand>
</feature>
<reference key="1">
    <citation type="journal article" date="1998" name="DNA Res.">
        <title>Complete sequence and gene organization of the genome of a hyper-thermophilic archaebacterium, Pyrococcus horikoshii OT3.</title>
        <authorList>
            <person name="Kawarabayasi Y."/>
            <person name="Sawada M."/>
            <person name="Horikawa H."/>
            <person name="Haikawa Y."/>
            <person name="Hino Y."/>
            <person name="Yamamoto S."/>
            <person name="Sekine M."/>
            <person name="Baba S."/>
            <person name="Kosugi H."/>
            <person name="Hosoyama A."/>
            <person name="Nagai Y."/>
            <person name="Sakai M."/>
            <person name="Ogura K."/>
            <person name="Otsuka R."/>
            <person name="Nakazawa H."/>
            <person name="Takamiya M."/>
            <person name="Ohfuku Y."/>
            <person name="Funahashi T."/>
            <person name="Tanaka T."/>
            <person name="Kudoh Y."/>
            <person name="Yamazaki J."/>
            <person name="Kushida N."/>
            <person name="Oguchi A."/>
            <person name="Aoki K."/>
            <person name="Yoshizawa T."/>
            <person name="Nakamura Y."/>
            <person name="Robb F.T."/>
            <person name="Horikoshi K."/>
            <person name="Masuchi Y."/>
            <person name="Shizuya H."/>
            <person name="Kikuchi H."/>
        </authorList>
    </citation>
    <scope>NUCLEOTIDE SEQUENCE [LARGE SCALE GENOMIC DNA]</scope>
    <source>
        <strain>ATCC 700860 / DSM 12428 / JCM 9974 / NBRC 100139 / OT-3</strain>
    </source>
</reference>
<comment type="function">
    <text evidence="1">DNA repair enzyme that is part of the base excision repair (BER) pathway; protects from oxidative damage by removing the major product of DNA oxidation, 8-oxoguanine (GO), from single- and double-stranded DNA substrates.</text>
</comment>
<comment type="catalytic activity">
    <reaction evidence="1">
        <text>2'-deoxyribonucleotide-(2'-deoxyribose 5'-phosphate)-2'-deoxyribonucleotide-DNA = a 3'-end 2'-deoxyribonucleotide-(2,3-dehydro-2,3-deoxyribose 5'-phosphate)-DNA + a 5'-end 5'-phospho-2'-deoxyribonucleoside-DNA + H(+)</text>
        <dbReference type="Rhea" id="RHEA:66592"/>
        <dbReference type="Rhea" id="RHEA-COMP:13180"/>
        <dbReference type="Rhea" id="RHEA-COMP:16897"/>
        <dbReference type="Rhea" id="RHEA-COMP:17067"/>
        <dbReference type="ChEBI" id="CHEBI:15378"/>
        <dbReference type="ChEBI" id="CHEBI:136412"/>
        <dbReference type="ChEBI" id="CHEBI:157695"/>
        <dbReference type="ChEBI" id="CHEBI:167181"/>
        <dbReference type="EC" id="4.2.99.18"/>
    </reaction>
</comment>
<comment type="domain">
    <text>Contains two alpha-helical subdomains, with the 8-oxoguanine binding site located in a cleft at their interface. Contains a helix-hairpin-helix (HhH) structural motif and a Gly/Pro-rich sequence followed by a conserved Asp (HhH-GPD motif).</text>
</comment>
<comment type="similarity">
    <text evidence="1">Belongs to the archaeal N-glycosylase/DNA lyase (AGOG) family.</text>
</comment>
<sequence>MIAELIREIGIEGARFIEENIDEQFKALSYLSEGMDRVNFVRLVIANALVSYQLTGKGEMWWWEFAKYFKGKEVKTIYSAYKEFLPNSKFNRRLIQQKLLRIKKIEPFLSTLTEESIERYYEDMTLLWKAIAKVLKVDRESKTVVFSVKMFGYAARIVLSKFNPYPMEIPIPEDVRIIKLTRKLTNERPRDFWMKIAKESNVPPLHIDSILWPLLGGARVEEAPPELKEKLEKLIRVIR</sequence>
<gene>
    <name type="ordered locus">PH1229</name>
</gene>
<organism>
    <name type="scientific">Pyrococcus horikoshii (strain ATCC 700860 / DSM 12428 / JCM 9974 / NBRC 100139 / OT-3)</name>
    <dbReference type="NCBI Taxonomy" id="70601"/>
    <lineage>
        <taxon>Archaea</taxon>
        <taxon>Methanobacteriati</taxon>
        <taxon>Methanobacteriota</taxon>
        <taxon>Thermococci</taxon>
        <taxon>Thermococcales</taxon>
        <taxon>Thermococcaceae</taxon>
        <taxon>Pyrococcus</taxon>
    </lineage>
</organism>
<keyword id="KW-0227">DNA damage</keyword>
<keyword id="KW-0228">DNA excision</keyword>
<keyword id="KW-0234">DNA repair</keyword>
<keyword id="KW-0378">Hydrolase</keyword>
<keyword id="KW-0456">Lyase</keyword>
<dbReference type="EC" id="3.2.2.-" evidence="1"/>
<dbReference type="EC" id="4.2.99.18" evidence="1"/>
<dbReference type="EMBL" id="BA000001">
    <property type="protein sequence ID" value="BAA30329.1"/>
    <property type="molecule type" value="Genomic_DNA"/>
</dbReference>
<dbReference type="PIR" id="G71066">
    <property type="entry name" value="G71066"/>
</dbReference>
<dbReference type="RefSeq" id="WP_010885316.1">
    <property type="nucleotide sequence ID" value="NC_000961.1"/>
</dbReference>
<dbReference type="SMR" id="O58954"/>
<dbReference type="STRING" id="70601.gene:9378191"/>
<dbReference type="EnsemblBacteria" id="BAA30329">
    <property type="protein sequence ID" value="BAA30329"/>
    <property type="gene ID" value="BAA30329"/>
</dbReference>
<dbReference type="GeneID" id="1443551"/>
<dbReference type="KEGG" id="pho:PH1229"/>
<dbReference type="eggNOG" id="arCOG04144">
    <property type="taxonomic scope" value="Archaea"/>
</dbReference>
<dbReference type="OrthoDB" id="15106at2157"/>
<dbReference type="Proteomes" id="UP000000752">
    <property type="component" value="Chromosome"/>
</dbReference>
<dbReference type="GO" id="GO:0140078">
    <property type="term" value="F:class I DNA-(apurinic or apyrimidinic site) endonuclease activity"/>
    <property type="evidence" value="ECO:0007669"/>
    <property type="project" value="UniProtKB-EC"/>
</dbReference>
<dbReference type="GO" id="GO:0000702">
    <property type="term" value="F:oxidized base lesion DNA N-glycosylase activity"/>
    <property type="evidence" value="ECO:0007669"/>
    <property type="project" value="UniProtKB-UniRule"/>
</dbReference>
<dbReference type="GO" id="GO:0006284">
    <property type="term" value="P:base-excision repair"/>
    <property type="evidence" value="ECO:0007669"/>
    <property type="project" value="UniProtKB-UniRule"/>
</dbReference>
<dbReference type="Gene3D" id="1.10.340.30">
    <property type="entry name" value="Hypothetical protein, domain 2"/>
    <property type="match status" value="1"/>
</dbReference>
<dbReference type="HAMAP" id="MF_01168">
    <property type="entry name" value="AGOG"/>
    <property type="match status" value="1"/>
</dbReference>
<dbReference type="InterPro" id="IPR016544">
    <property type="entry name" value="AGOG"/>
</dbReference>
<dbReference type="InterPro" id="IPR015254">
    <property type="entry name" value="AGOG-like"/>
</dbReference>
<dbReference type="InterPro" id="IPR011257">
    <property type="entry name" value="DNA_glycosylase"/>
</dbReference>
<dbReference type="NCBIfam" id="NF009785">
    <property type="entry name" value="PRK13280.1-2"/>
    <property type="match status" value="1"/>
</dbReference>
<dbReference type="Pfam" id="PF09171">
    <property type="entry name" value="AGOG"/>
    <property type="match status" value="1"/>
</dbReference>
<dbReference type="PIRSF" id="PIRSF008955">
    <property type="entry name" value="AGOG"/>
    <property type="match status" value="1"/>
</dbReference>
<dbReference type="SUPFAM" id="SSF48150">
    <property type="entry name" value="DNA-glycosylase"/>
    <property type="match status" value="1"/>
</dbReference>
<proteinExistence type="inferred from homology"/>